<feature type="chain" id="PRO_1000056148" description="Bifunctional protein GlmU">
    <location>
        <begin position="1"/>
        <end position="429"/>
    </location>
</feature>
<feature type="region of interest" description="Pyrophosphorylase" evidence="1">
    <location>
        <begin position="1"/>
        <end position="223"/>
    </location>
</feature>
<feature type="region of interest" description="Linker" evidence="1">
    <location>
        <begin position="224"/>
        <end position="244"/>
    </location>
</feature>
<feature type="region of interest" description="N-acetyltransferase" evidence="1">
    <location>
        <begin position="245"/>
        <end position="429"/>
    </location>
</feature>
<feature type="active site" description="Proton acceptor" evidence="1">
    <location>
        <position position="336"/>
    </location>
</feature>
<feature type="binding site" evidence="1">
    <location>
        <begin position="8"/>
        <end position="11"/>
    </location>
    <ligand>
        <name>UDP-N-acetyl-alpha-D-glucosamine</name>
        <dbReference type="ChEBI" id="CHEBI:57705"/>
    </ligand>
</feature>
<feature type="binding site" evidence="1">
    <location>
        <position position="22"/>
    </location>
    <ligand>
        <name>UDP-N-acetyl-alpha-D-glucosamine</name>
        <dbReference type="ChEBI" id="CHEBI:57705"/>
    </ligand>
</feature>
<feature type="binding site" evidence="1">
    <location>
        <begin position="81"/>
        <end position="82"/>
    </location>
    <ligand>
        <name>UDP-N-acetyl-alpha-D-glucosamine</name>
        <dbReference type="ChEBI" id="CHEBI:57705"/>
    </ligand>
</feature>
<feature type="binding site" evidence="1">
    <location>
        <position position="102"/>
    </location>
    <ligand>
        <name>Mg(2+)</name>
        <dbReference type="ChEBI" id="CHEBI:18420"/>
    </ligand>
</feature>
<feature type="binding site" evidence="1">
    <location>
        <position position="135"/>
    </location>
    <ligand>
        <name>UDP-N-acetyl-alpha-D-glucosamine</name>
        <dbReference type="ChEBI" id="CHEBI:57705"/>
    </ligand>
</feature>
<feature type="binding site" evidence="1">
    <location>
        <position position="149"/>
    </location>
    <ligand>
        <name>UDP-N-acetyl-alpha-D-glucosamine</name>
        <dbReference type="ChEBI" id="CHEBI:57705"/>
    </ligand>
</feature>
<feature type="binding site" evidence="1">
    <location>
        <position position="164"/>
    </location>
    <ligand>
        <name>UDP-N-acetyl-alpha-D-glucosamine</name>
        <dbReference type="ChEBI" id="CHEBI:57705"/>
    </ligand>
</feature>
<feature type="binding site" evidence="1">
    <location>
        <position position="221"/>
    </location>
    <ligand>
        <name>Mg(2+)</name>
        <dbReference type="ChEBI" id="CHEBI:18420"/>
    </ligand>
</feature>
<feature type="binding site" evidence="1">
    <location>
        <position position="221"/>
    </location>
    <ligand>
        <name>UDP-N-acetyl-alpha-D-glucosamine</name>
        <dbReference type="ChEBI" id="CHEBI:57705"/>
    </ligand>
</feature>
<feature type="binding site" evidence="1">
    <location>
        <position position="308"/>
    </location>
    <ligand>
        <name>UDP-N-acetyl-alpha-D-glucosamine</name>
        <dbReference type="ChEBI" id="CHEBI:57705"/>
    </ligand>
</feature>
<feature type="binding site" evidence="1">
    <location>
        <position position="325"/>
    </location>
    <ligand>
        <name>UDP-N-acetyl-alpha-D-glucosamine</name>
        <dbReference type="ChEBI" id="CHEBI:57705"/>
    </ligand>
</feature>
<feature type="binding site" evidence="1">
    <location>
        <position position="339"/>
    </location>
    <ligand>
        <name>UDP-N-acetyl-alpha-D-glucosamine</name>
        <dbReference type="ChEBI" id="CHEBI:57705"/>
    </ligand>
</feature>
<feature type="binding site" evidence="1">
    <location>
        <position position="350"/>
    </location>
    <ligand>
        <name>UDP-N-acetyl-alpha-D-glucosamine</name>
        <dbReference type="ChEBI" id="CHEBI:57705"/>
    </ligand>
</feature>
<feature type="binding site" evidence="1">
    <location>
        <begin position="359"/>
        <end position="360"/>
    </location>
    <ligand>
        <name>acetyl-CoA</name>
        <dbReference type="ChEBI" id="CHEBI:57288"/>
    </ligand>
</feature>
<feature type="binding site" evidence="1">
    <location>
        <position position="378"/>
    </location>
    <ligand>
        <name>acetyl-CoA</name>
        <dbReference type="ChEBI" id="CHEBI:57288"/>
    </ligand>
</feature>
<feature type="binding site" evidence="1">
    <location>
        <position position="396"/>
    </location>
    <ligand>
        <name>acetyl-CoA</name>
        <dbReference type="ChEBI" id="CHEBI:57288"/>
    </ligand>
</feature>
<feature type="binding site" evidence="1">
    <location>
        <position position="413"/>
    </location>
    <ligand>
        <name>acetyl-CoA</name>
        <dbReference type="ChEBI" id="CHEBI:57288"/>
    </ligand>
</feature>
<protein>
    <recommendedName>
        <fullName evidence="1">Bifunctional protein GlmU</fullName>
    </recommendedName>
    <domain>
        <recommendedName>
            <fullName evidence="1">UDP-N-acetylglucosamine pyrophosphorylase</fullName>
            <ecNumber evidence="1">2.7.7.23</ecNumber>
        </recommendedName>
        <alternativeName>
            <fullName evidence="1">N-acetylglucosamine-1-phosphate uridyltransferase</fullName>
        </alternativeName>
    </domain>
    <domain>
        <recommendedName>
            <fullName evidence="1">Glucosamine-1-phosphate N-acetyltransferase</fullName>
            <ecNumber evidence="1">2.3.1.157</ecNumber>
        </recommendedName>
    </domain>
</protein>
<comment type="function">
    <text evidence="1">Catalyzes the last two sequential reactions in the de novo biosynthetic pathway for UDP-N-acetylglucosamine (UDP-GlcNAc). The C-terminal domain catalyzes the transfer of acetyl group from acetyl coenzyme A to glucosamine-1-phosphate (GlcN-1-P) to produce N-acetylglucosamine-1-phosphate (GlcNAc-1-P), which is converted into UDP-GlcNAc by the transfer of uridine 5-monophosphate (from uridine 5-triphosphate), a reaction catalyzed by the N-terminal domain.</text>
</comment>
<comment type="catalytic activity">
    <reaction evidence="1">
        <text>alpha-D-glucosamine 1-phosphate + acetyl-CoA = N-acetyl-alpha-D-glucosamine 1-phosphate + CoA + H(+)</text>
        <dbReference type="Rhea" id="RHEA:13725"/>
        <dbReference type="ChEBI" id="CHEBI:15378"/>
        <dbReference type="ChEBI" id="CHEBI:57287"/>
        <dbReference type="ChEBI" id="CHEBI:57288"/>
        <dbReference type="ChEBI" id="CHEBI:57776"/>
        <dbReference type="ChEBI" id="CHEBI:58516"/>
        <dbReference type="EC" id="2.3.1.157"/>
    </reaction>
</comment>
<comment type="catalytic activity">
    <reaction evidence="1">
        <text>N-acetyl-alpha-D-glucosamine 1-phosphate + UTP + H(+) = UDP-N-acetyl-alpha-D-glucosamine + diphosphate</text>
        <dbReference type="Rhea" id="RHEA:13509"/>
        <dbReference type="ChEBI" id="CHEBI:15378"/>
        <dbReference type="ChEBI" id="CHEBI:33019"/>
        <dbReference type="ChEBI" id="CHEBI:46398"/>
        <dbReference type="ChEBI" id="CHEBI:57705"/>
        <dbReference type="ChEBI" id="CHEBI:57776"/>
        <dbReference type="EC" id="2.7.7.23"/>
    </reaction>
</comment>
<comment type="cofactor">
    <cofactor evidence="1">
        <name>Mg(2+)</name>
        <dbReference type="ChEBI" id="CHEBI:18420"/>
    </cofactor>
    <text evidence="1">Binds 1 Mg(2+) ion per subunit.</text>
</comment>
<comment type="pathway">
    <text evidence="1">Nucleotide-sugar biosynthesis; UDP-N-acetyl-alpha-D-glucosamine biosynthesis; N-acetyl-alpha-D-glucosamine 1-phosphate from alpha-D-glucosamine 6-phosphate (route II): step 2/2.</text>
</comment>
<comment type="pathway">
    <text evidence="1">Nucleotide-sugar biosynthesis; UDP-N-acetyl-alpha-D-glucosamine biosynthesis; UDP-N-acetyl-alpha-D-glucosamine from N-acetyl-alpha-D-glucosamine 1-phosphate: step 1/1.</text>
</comment>
<comment type="pathway">
    <text evidence="1">Bacterial outer membrane biogenesis; LPS lipid A biosynthesis.</text>
</comment>
<comment type="subunit">
    <text evidence="1">Homotrimer.</text>
</comment>
<comment type="subcellular location">
    <subcellularLocation>
        <location evidence="1">Cytoplasm</location>
    </subcellularLocation>
</comment>
<comment type="similarity">
    <text evidence="1">In the N-terminal section; belongs to the N-acetylglucosamine-1-phosphate uridyltransferase family.</text>
</comment>
<comment type="similarity">
    <text evidence="1">In the C-terminal section; belongs to the transferase hexapeptide repeat family.</text>
</comment>
<sequence length="429" mass="47995">MKTSILILAAGLGTRIKSQKPKVLQELCQKSMILHILKKAFALSDDVSVVLSHQKERVEKEILEYFPKTQILEQDLQNYPGTAGALSGFEPKNERVLILCGDMPLVEQTSLEALLSNNAKLNLAVFKARDPKSYGRVVIKNDSVEKIVEFKDANTQEKEINTCNAGVYVIDSRLLKELLPLIDNNNAAKEYYLTDIVKLAKEKDVMIKAVFVDEDEFMGINDKFELSIAENFMQEKIKKYWMQQGVIFHLPQSTFIGADVEFVGECEVYENVRIEGKSKIINSIIKSSSVIENSIVENSDVGPLAHLRPNCELKNTHIGNFVECKNAKLNTVKAGHLSYLGDCEIDSGTNIGCGTITCNYDGVKKHKTIIGKNVFVGSDTQFIAPVKIEDEVIIAAGSTVSVNVEKGALFINRAEHKMIKDYYYKKFQK</sequence>
<name>GLMU_CAMJJ</name>
<accession>A1VZG5</accession>
<keyword id="KW-0012">Acyltransferase</keyword>
<keyword id="KW-0133">Cell shape</keyword>
<keyword id="KW-0961">Cell wall biogenesis/degradation</keyword>
<keyword id="KW-0963">Cytoplasm</keyword>
<keyword id="KW-0460">Magnesium</keyword>
<keyword id="KW-0479">Metal-binding</keyword>
<keyword id="KW-0511">Multifunctional enzyme</keyword>
<keyword id="KW-0548">Nucleotidyltransferase</keyword>
<keyword id="KW-0573">Peptidoglycan synthesis</keyword>
<keyword id="KW-0677">Repeat</keyword>
<keyword id="KW-0808">Transferase</keyword>
<organism>
    <name type="scientific">Campylobacter jejuni subsp. jejuni serotype O:23/36 (strain 81-176)</name>
    <dbReference type="NCBI Taxonomy" id="354242"/>
    <lineage>
        <taxon>Bacteria</taxon>
        <taxon>Pseudomonadati</taxon>
        <taxon>Campylobacterota</taxon>
        <taxon>Epsilonproteobacteria</taxon>
        <taxon>Campylobacterales</taxon>
        <taxon>Campylobacteraceae</taxon>
        <taxon>Campylobacter</taxon>
    </lineage>
</organism>
<dbReference type="EC" id="2.7.7.23" evidence="1"/>
<dbReference type="EC" id="2.3.1.157" evidence="1"/>
<dbReference type="EMBL" id="CP000538">
    <property type="protein sequence ID" value="EAQ72470.1"/>
    <property type="molecule type" value="Genomic_DNA"/>
</dbReference>
<dbReference type="RefSeq" id="WP_002868801.1">
    <property type="nucleotide sequence ID" value="NC_008787.1"/>
</dbReference>
<dbReference type="SMR" id="A1VZG5"/>
<dbReference type="KEGG" id="cjj:CJJ81176_0838"/>
<dbReference type="eggNOG" id="COG1207">
    <property type="taxonomic scope" value="Bacteria"/>
</dbReference>
<dbReference type="HOGENOM" id="CLU_029499_15_2_7"/>
<dbReference type="UniPathway" id="UPA00113">
    <property type="reaction ID" value="UER00532"/>
</dbReference>
<dbReference type="UniPathway" id="UPA00113">
    <property type="reaction ID" value="UER00533"/>
</dbReference>
<dbReference type="UniPathway" id="UPA00973"/>
<dbReference type="Proteomes" id="UP000000646">
    <property type="component" value="Chromosome"/>
</dbReference>
<dbReference type="GO" id="GO:0005737">
    <property type="term" value="C:cytoplasm"/>
    <property type="evidence" value="ECO:0007669"/>
    <property type="project" value="UniProtKB-SubCell"/>
</dbReference>
<dbReference type="GO" id="GO:0016020">
    <property type="term" value="C:membrane"/>
    <property type="evidence" value="ECO:0007669"/>
    <property type="project" value="GOC"/>
</dbReference>
<dbReference type="GO" id="GO:0019134">
    <property type="term" value="F:glucosamine-1-phosphate N-acetyltransferase activity"/>
    <property type="evidence" value="ECO:0007669"/>
    <property type="project" value="UniProtKB-UniRule"/>
</dbReference>
<dbReference type="GO" id="GO:0000287">
    <property type="term" value="F:magnesium ion binding"/>
    <property type="evidence" value="ECO:0007669"/>
    <property type="project" value="UniProtKB-UniRule"/>
</dbReference>
<dbReference type="GO" id="GO:0003977">
    <property type="term" value="F:UDP-N-acetylglucosamine diphosphorylase activity"/>
    <property type="evidence" value="ECO:0007669"/>
    <property type="project" value="UniProtKB-UniRule"/>
</dbReference>
<dbReference type="GO" id="GO:0000902">
    <property type="term" value="P:cell morphogenesis"/>
    <property type="evidence" value="ECO:0007669"/>
    <property type="project" value="UniProtKB-UniRule"/>
</dbReference>
<dbReference type="GO" id="GO:0071555">
    <property type="term" value="P:cell wall organization"/>
    <property type="evidence" value="ECO:0007669"/>
    <property type="project" value="UniProtKB-KW"/>
</dbReference>
<dbReference type="GO" id="GO:0009245">
    <property type="term" value="P:lipid A biosynthetic process"/>
    <property type="evidence" value="ECO:0007669"/>
    <property type="project" value="UniProtKB-UniRule"/>
</dbReference>
<dbReference type="GO" id="GO:0009252">
    <property type="term" value="P:peptidoglycan biosynthetic process"/>
    <property type="evidence" value="ECO:0007669"/>
    <property type="project" value="UniProtKB-UniRule"/>
</dbReference>
<dbReference type="GO" id="GO:0008360">
    <property type="term" value="P:regulation of cell shape"/>
    <property type="evidence" value="ECO:0007669"/>
    <property type="project" value="UniProtKB-KW"/>
</dbReference>
<dbReference type="GO" id="GO:0006048">
    <property type="term" value="P:UDP-N-acetylglucosamine biosynthetic process"/>
    <property type="evidence" value="ECO:0007669"/>
    <property type="project" value="UniProtKB-UniPathway"/>
</dbReference>
<dbReference type="CDD" id="cd02540">
    <property type="entry name" value="GT2_GlmU_N_bac"/>
    <property type="match status" value="1"/>
</dbReference>
<dbReference type="CDD" id="cd03353">
    <property type="entry name" value="LbH_GlmU_C"/>
    <property type="match status" value="1"/>
</dbReference>
<dbReference type="Gene3D" id="2.160.10.10">
    <property type="entry name" value="Hexapeptide repeat proteins"/>
    <property type="match status" value="1"/>
</dbReference>
<dbReference type="Gene3D" id="3.90.550.10">
    <property type="entry name" value="Spore Coat Polysaccharide Biosynthesis Protein SpsA, Chain A"/>
    <property type="match status" value="1"/>
</dbReference>
<dbReference type="HAMAP" id="MF_01631">
    <property type="entry name" value="GlmU"/>
    <property type="match status" value="1"/>
</dbReference>
<dbReference type="InterPro" id="IPR005882">
    <property type="entry name" value="Bifunctional_GlmU"/>
</dbReference>
<dbReference type="InterPro" id="IPR050065">
    <property type="entry name" value="GlmU-like"/>
</dbReference>
<dbReference type="InterPro" id="IPR038009">
    <property type="entry name" value="GlmU_C_LbH"/>
</dbReference>
<dbReference type="InterPro" id="IPR001451">
    <property type="entry name" value="Hexapep"/>
</dbReference>
<dbReference type="InterPro" id="IPR025877">
    <property type="entry name" value="MobA-like_NTP_Trfase"/>
</dbReference>
<dbReference type="InterPro" id="IPR029044">
    <property type="entry name" value="Nucleotide-diphossugar_trans"/>
</dbReference>
<dbReference type="InterPro" id="IPR011004">
    <property type="entry name" value="Trimer_LpxA-like_sf"/>
</dbReference>
<dbReference type="NCBIfam" id="TIGR01173">
    <property type="entry name" value="glmU"/>
    <property type="match status" value="1"/>
</dbReference>
<dbReference type="NCBIfam" id="NF010939">
    <property type="entry name" value="PRK14359.1"/>
    <property type="match status" value="1"/>
</dbReference>
<dbReference type="PANTHER" id="PTHR43584:SF3">
    <property type="entry name" value="BIFUNCTIONAL PROTEIN GLMU"/>
    <property type="match status" value="1"/>
</dbReference>
<dbReference type="PANTHER" id="PTHR43584">
    <property type="entry name" value="NUCLEOTIDYL TRANSFERASE"/>
    <property type="match status" value="1"/>
</dbReference>
<dbReference type="Pfam" id="PF00132">
    <property type="entry name" value="Hexapep"/>
    <property type="match status" value="1"/>
</dbReference>
<dbReference type="Pfam" id="PF12804">
    <property type="entry name" value="NTP_transf_3"/>
    <property type="match status" value="1"/>
</dbReference>
<dbReference type="SUPFAM" id="SSF53448">
    <property type="entry name" value="Nucleotide-diphospho-sugar transferases"/>
    <property type="match status" value="1"/>
</dbReference>
<dbReference type="SUPFAM" id="SSF51161">
    <property type="entry name" value="Trimeric LpxA-like enzymes"/>
    <property type="match status" value="1"/>
</dbReference>
<evidence type="ECO:0000255" key="1">
    <source>
        <dbReference type="HAMAP-Rule" id="MF_01631"/>
    </source>
</evidence>
<gene>
    <name evidence="1" type="primary">glmU</name>
    <name type="ordered locus">CJJ81176_0838</name>
</gene>
<proteinExistence type="inferred from homology"/>
<reference key="1">
    <citation type="submission" date="2006-12" db="EMBL/GenBank/DDBJ databases">
        <authorList>
            <person name="Fouts D.E."/>
            <person name="Nelson K.E."/>
            <person name="Sebastian Y."/>
        </authorList>
    </citation>
    <scope>NUCLEOTIDE SEQUENCE [LARGE SCALE GENOMIC DNA]</scope>
    <source>
        <strain>81-176</strain>
    </source>
</reference>